<gene>
    <name evidence="1" type="primary">ribH</name>
    <name type="ordered locus">IL2142</name>
</gene>
<accession>Q5QVF0</accession>
<comment type="function">
    <text evidence="1">Catalyzes the formation of 6,7-dimethyl-8-ribityllumazine by condensation of 5-amino-6-(D-ribitylamino)uracil with 3,4-dihydroxy-2-butanone 4-phosphate. This is the penultimate step in the biosynthesis of riboflavin.</text>
</comment>
<comment type="catalytic activity">
    <reaction evidence="1">
        <text>(2S)-2-hydroxy-3-oxobutyl phosphate + 5-amino-6-(D-ribitylamino)uracil = 6,7-dimethyl-8-(1-D-ribityl)lumazine + phosphate + 2 H2O + H(+)</text>
        <dbReference type="Rhea" id="RHEA:26152"/>
        <dbReference type="ChEBI" id="CHEBI:15377"/>
        <dbReference type="ChEBI" id="CHEBI:15378"/>
        <dbReference type="ChEBI" id="CHEBI:15934"/>
        <dbReference type="ChEBI" id="CHEBI:43474"/>
        <dbReference type="ChEBI" id="CHEBI:58201"/>
        <dbReference type="ChEBI" id="CHEBI:58830"/>
        <dbReference type="EC" id="2.5.1.78"/>
    </reaction>
</comment>
<comment type="pathway">
    <text evidence="1">Cofactor biosynthesis; riboflavin biosynthesis; riboflavin from 2-hydroxy-3-oxobutyl phosphate and 5-amino-6-(D-ribitylamino)uracil: step 1/2.</text>
</comment>
<comment type="subunit">
    <text evidence="1">Forms an icosahedral capsid composed of 60 subunits, arranged as a dodecamer of pentamers.</text>
</comment>
<comment type="similarity">
    <text evidence="1">Belongs to the DMRL synthase family.</text>
</comment>
<keyword id="KW-1185">Reference proteome</keyword>
<keyword id="KW-0686">Riboflavin biosynthesis</keyword>
<keyword id="KW-0808">Transferase</keyword>
<evidence type="ECO:0000255" key="1">
    <source>
        <dbReference type="HAMAP-Rule" id="MF_00178"/>
    </source>
</evidence>
<proteinExistence type="inferred from homology"/>
<dbReference type="EC" id="2.5.1.78" evidence="1"/>
<dbReference type="EMBL" id="AE017340">
    <property type="protein sequence ID" value="AAV82974.1"/>
    <property type="molecule type" value="Genomic_DNA"/>
</dbReference>
<dbReference type="SMR" id="Q5QVF0"/>
<dbReference type="STRING" id="283942.IL2142"/>
<dbReference type="GeneID" id="41337331"/>
<dbReference type="KEGG" id="ilo:IL2142"/>
<dbReference type="eggNOG" id="COG0054">
    <property type="taxonomic scope" value="Bacteria"/>
</dbReference>
<dbReference type="HOGENOM" id="CLU_089358_1_1_6"/>
<dbReference type="OrthoDB" id="9809709at2"/>
<dbReference type="UniPathway" id="UPA00275">
    <property type="reaction ID" value="UER00404"/>
</dbReference>
<dbReference type="Proteomes" id="UP000001171">
    <property type="component" value="Chromosome"/>
</dbReference>
<dbReference type="GO" id="GO:0005829">
    <property type="term" value="C:cytosol"/>
    <property type="evidence" value="ECO:0007669"/>
    <property type="project" value="TreeGrafter"/>
</dbReference>
<dbReference type="GO" id="GO:0009349">
    <property type="term" value="C:riboflavin synthase complex"/>
    <property type="evidence" value="ECO:0007669"/>
    <property type="project" value="InterPro"/>
</dbReference>
<dbReference type="GO" id="GO:0000906">
    <property type="term" value="F:6,7-dimethyl-8-ribityllumazine synthase activity"/>
    <property type="evidence" value="ECO:0007669"/>
    <property type="project" value="UniProtKB-UniRule"/>
</dbReference>
<dbReference type="GO" id="GO:0009231">
    <property type="term" value="P:riboflavin biosynthetic process"/>
    <property type="evidence" value="ECO:0007669"/>
    <property type="project" value="UniProtKB-UniRule"/>
</dbReference>
<dbReference type="CDD" id="cd09209">
    <property type="entry name" value="Lumazine_synthase-I"/>
    <property type="match status" value="1"/>
</dbReference>
<dbReference type="FunFam" id="3.40.50.960:FF:000001">
    <property type="entry name" value="6,7-dimethyl-8-ribityllumazine synthase"/>
    <property type="match status" value="1"/>
</dbReference>
<dbReference type="Gene3D" id="3.40.50.960">
    <property type="entry name" value="Lumazine/riboflavin synthase"/>
    <property type="match status" value="1"/>
</dbReference>
<dbReference type="HAMAP" id="MF_00178">
    <property type="entry name" value="Lumazine_synth"/>
    <property type="match status" value="1"/>
</dbReference>
<dbReference type="InterPro" id="IPR034964">
    <property type="entry name" value="LS"/>
</dbReference>
<dbReference type="InterPro" id="IPR002180">
    <property type="entry name" value="LS/RS"/>
</dbReference>
<dbReference type="InterPro" id="IPR036467">
    <property type="entry name" value="LS/RS_sf"/>
</dbReference>
<dbReference type="NCBIfam" id="TIGR00114">
    <property type="entry name" value="lumazine-synth"/>
    <property type="match status" value="1"/>
</dbReference>
<dbReference type="NCBIfam" id="NF000812">
    <property type="entry name" value="PRK00061.1-4"/>
    <property type="match status" value="1"/>
</dbReference>
<dbReference type="PANTHER" id="PTHR21058:SF0">
    <property type="entry name" value="6,7-DIMETHYL-8-RIBITYLLUMAZINE SYNTHASE"/>
    <property type="match status" value="1"/>
</dbReference>
<dbReference type="PANTHER" id="PTHR21058">
    <property type="entry name" value="6,7-DIMETHYL-8-RIBITYLLUMAZINE SYNTHASE DMRL SYNTHASE LUMAZINE SYNTHASE"/>
    <property type="match status" value="1"/>
</dbReference>
<dbReference type="Pfam" id="PF00885">
    <property type="entry name" value="DMRL_synthase"/>
    <property type="match status" value="1"/>
</dbReference>
<dbReference type="SUPFAM" id="SSF52121">
    <property type="entry name" value="Lumazine synthase"/>
    <property type="match status" value="1"/>
</dbReference>
<name>RISB_IDILO</name>
<reference key="1">
    <citation type="journal article" date="2004" name="Proc. Natl. Acad. Sci. U.S.A.">
        <title>Genome sequence of the deep-sea gamma-proteobacterium Idiomarina loihiensis reveals amino acid fermentation as a source of carbon and energy.</title>
        <authorList>
            <person name="Hou S."/>
            <person name="Saw J.H."/>
            <person name="Lee K.S."/>
            <person name="Freitas T.A."/>
            <person name="Belisle C."/>
            <person name="Kawarabayasi Y."/>
            <person name="Donachie S.P."/>
            <person name="Pikina A."/>
            <person name="Galperin M.Y."/>
            <person name="Koonin E.V."/>
            <person name="Makarova K.S."/>
            <person name="Omelchenko M.V."/>
            <person name="Sorokin A."/>
            <person name="Wolf Y.I."/>
            <person name="Li Q.X."/>
            <person name="Keum Y.S."/>
            <person name="Campbell S."/>
            <person name="Denery J."/>
            <person name="Aizawa S."/>
            <person name="Shibata S."/>
            <person name="Malahoff A."/>
            <person name="Alam M."/>
        </authorList>
    </citation>
    <scope>NUCLEOTIDE SEQUENCE [LARGE SCALE GENOMIC DNA]</scope>
    <source>
        <strain>ATCC BAA-735 / DSM 15497 / L2-TR</strain>
    </source>
</reference>
<protein>
    <recommendedName>
        <fullName evidence="1">6,7-dimethyl-8-ribityllumazine synthase</fullName>
        <shortName evidence="1">DMRL synthase</shortName>
        <shortName evidence="1">LS</shortName>
        <shortName evidence="1">Lumazine synthase</shortName>
        <ecNumber evidence="1">2.5.1.78</ecNumber>
    </recommendedName>
</protein>
<organism>
    <name type="scientific">Idiomarina loihiensis (strain ATCC BAA-735 / DSM 15497 / L2-TR)</name>
    <dbReference type="NCBI Taxonomy" id="283942"/>
    <lineage>
        <taxon>Bacteria</taxon>
        <taxon>Pseudomonadati</taxon>
        <taxon>Pseudomonadota</taxon>
        <taxon>Gammaproteobacteria</taxon>
        <taxon>Alteromonadales</taxon>
        <taxon>Idiomarinaceae</taxon>
        <taxon>Idiomarina</taxon>
    </lineage>
</organism>
<sequence length="154" mass="16212">MQVIEGGINAAGKKFAIIVSRFNHFMVESLLDGAVQTLKHYGEVADDDITVVRVPGAYEMPVTAKRLASSGKYDAIIAVGAVIRGGTPHFEFVAGECNSGLGRVATEFDLPVAFGVITTDTLEQAIERSGSKAGNKGSEAALSALEMVNVLKQL</sequence>
<feature type="chain" id="PRO_1000040434" description="6,7-dimethyl-8-ribityllumazine synthase">
    <location>
        <begin position="1"/>
        <end position="154"/>
    </location>
</feature>
<feature type="active site" description="Proton donor" evidence="1">
    <location>
        <position position="89"/>
    </location>
</feature>
<feature type="binding site" evidence="1">
    <location>
        <position position="22"/>
    </location>
    <ligand>
        <name>5-amino-6-(D-ribitylamino)uracil</name>
        <dbReference type="ChEBI" id="CHEBI:15934"/>
    </ligand>
</feature>
<feature type="binding site" evidence="1">
    <location>
        <begin position="57"/>
        <end position="59"/>
    </location>
    <ligand>
        <name>5-amino-6-(D-ribitylamino)uracil</name>
        <dbReference type="ChEBI" id="CHEBI:15934"/>
    </ligand>
</feature>
<feature type="binding site" evidence="1">
    <location>
        <begin position="81"/>
        <end position="83"/>
    </location>
    <ligand>
        <name>5-amino-6-(D-ribitylamino)uracil</name>
        <dbReference type="ChEBI" id="CHEBI:15934"/>
    </ligand>
</feature>
<feature type="binding site" evidence="1">
    <location>
        <begin position="86"/>
        <end position="87"/>
    </location>
    <ligand>
        <name>(2S)-2-hydroxy-3-oxobutyl phosphate</name>
        <dbReference type="ChEBI" id="CHEBI:58830"/>
    </ligand>
</feature>
<feature type="binding site" evidence="1">
    <location>
        <position position="114"/>
    </location>
    <ligand>
        <name>5-amino-6-(D-ribitylamino)uracil</name>
        <dbReference type="ChEBI" id="CHEBI:15934"/>
    </ligand>
</feature>
<feature type="binding site" evidence="1">
    <location>
        <position position="128"/>
    </location>
    <ligand>
        <name>(2S)-2-hydroxy-3-oxobutyl phosphate</name>
        <dbReference type="ChEBI" id="CHEBI:58830"/>
    </ligand>
</feature>